<keyword id="KW-0067">ATP-binding</keyword>
<keyword id="KW-0170">Cobalt</keyword>
<keyword id="KW-0963">Cytoplasm</keyword>
<keyword id="KW-0460">Magnesium</keyword>
<keyword id="KW-0479">Metal-binding</keyword>
<keyword id="KW-0547">Nucleotide-binding</keyword>
<keyword id="KW-0554">One-carbon metabolism</keyword>
<keyword id="KW-0630">Potassium</keyword>
<keyword id="KW-0808">Transferase</keyword>
<protein>
    <recommendedName>
        <fullName>S-adenosylmethionine synthase 3</fullName>
        <shortName>AdoMet synthase 3</shortName>
        <ecNumber evidence="5">2.5.1.6</ecNumber>
    </recommendedName>
    <alternativeName>
        <fullName>Methionine adenosyltransferase 3</fullName>
        <shortName>MAT 3</shortName>
    </alternativeName>
</protein>
<evidence type="ECO:0000250" key="1"/>
<evidence type="ECO:0000250" key="2">
    <source>
        <dbReference type="UniProtKB" id="P0A817"/>
    </source>
</evidence>
<evidence type="ECO:0000250" key="3">
    <source>
        <dbReference type="UniProtKB" id="P13444"/>
    </source>
</evidence>
<evidence type="ECO:0000250" key="4">
    <source>
        <dbReference type="UniProtKB" id="Q00266"/>
    </source>
</evidence>
<evidence type="ECO:0000250" key="5">
    <source>
        <dbReference type="UniProtKB" id="Q96551"/>
    </source>
</evidence>
<evidence type="ECO:0000305" key="6"/>
<gene>
    <name type="primary">METK3</name>
    <name type="ORF">GSVIVT00000624001</name>
    <name type="ORF">LOC100245243</name>
</gene>
<name>METK3_VITVI</name>
<comment type="function">
    <text evidence="5">Catalyzes the formation of S-adenosylmethionine from methionine and ATP. The reaction comprises two steps that are both catalyzed by the same enzyme: formation of S-adenosylmethionine (AdoMet) and triphosphate, and subsequent hydrolysis of the triphosphate.</text>
</comment>
<comment type="catalytic activity">
    <reaction evidence="5">
        <text>L-methionine + ATP + H2O = S-adenosyl-L-methionine + phosphate + diphosphate</text>
        <dbReference type="Rhea" id="RHEA:21080"/>
        <dbReference type="ChEBI" id="CHEBI:15377"/>
        <dbReference type="ChEBI" id="CHEBI:30616"/>
        <dbReference type="ChEBI" id="CHEBI:33019"/>
        <dbReference type="ChEBI" id="CHEBI:43474"/>
        <dbReference type="ChEBI" id="CHEBI:57844"/>
        <dbReference type="ChEBI" id="CHEBI:59789"/>
        <dbReference type="EC" id="2.5.1.6"/>
    </reaction>
</comment>
<comment type="cofactor">
    <cofactor evidence="5">
        <name>Mn(2+)</name>
        <dbReference type="ChEBI" id="CHEBI:29035"/>
    </cofactor>
    <cofactor evidence="5">
        <name>Mg(2+)</name>
        <dbReference type="ChEBI" id="CHEBI:18420"/>
    </cofactor>
    <cofactor evidence="5">
        <name>Co(2+)</name>
        <dbReference type="ChEBI" id="CHEBI:48828"/>
    </cofactor>
    <text evidence="3 5">Binds 2 divalent ions per subunit. The metal ions interact primarily with the substrate (By similarity). Can utilize magnesium, manganese or cobalt (in vitro) (By similarity).</text>
</comment>
<comment type="cofactor">
    <cofactor evidence="5">
        <name>K(+)</name>
        <dbReference type="ChEBI" id="CHEBI:29103"/>
    </cofactor>
    <text evidence="3">Binds 1 potassium ion per subunit. The potassium ion interacts primarily with the substrate (By similarity).</text>
</comment>
<comment type="pathway">
    <text evidence="5">Amino-acid biosynthesis; S-adenosyl-L-methionine biosynthesis; S-adenosyl-L-methionine from L-methionine: step 1/1.</text>
</comment>
<comment type="subunit">
    <text evidence="1">Homotetramer.</text>
</comment>
<comment type="subcellular location">
    <subcellularLocation>
        <location evidence="1">Cytoplasm</location>
    </subcellularLocation>
</comment>
<comment type="similarity">
    <text evidence="6">Belongs to the AdoMet synthase family.</text>
</comment>
<sequence length="389" mass="42618">MDTFLFTSESVNEGHPDKLCDQVSDAILDACLEQDPESKVACETCSKTNMVMVFGEITTKAKVDYEKIVRDTCRGIGFVSADVGLDADNCKVLVNIEQQSPDIAQGVHGHLSKKPEEIGAGDQGHMFGYATDETPELMPLTHVLATKLGAKLTEVRKNKTCPWLRPDGKTQVTVEYRNEGGAMVPIRVHTVLISTQHDETVTNDQIAKELREHVIKPVIPSKFMDDKTIFHLNPSGRFVIGGPHGDAGLTGRKIIIDTYGGWGAHGGGAFSGKDPTKVDRSGAYIVRQAAKSVVASGLARRCLVQVSYAIGVPEPLSVFVDTYKTGKIPDKDILDLIKENFDFRPGMIAINLDLKRGGNFRFQKTAAYGHFGRDDPDFTWETVKLLKKA</sequence>
<accession>A7QJG1</accession>
<organism>
    <name type="scientific">Vitis vinifera</name>
    <name type="common">Grape</name>
    <dbReference type="NCBI Taxonomy" id="29760"/>
    <lineage>
        <taxon>Eukaryota</taxon>
        <taxon>Viridiplantae</taxon>
        <taxon>Streptophyta</taxon>
        <taxon>Embryophyta</taxon>
        <taxon>Tracheophyta</taxon>
        <taxon>Spermatophyta</taxon>
        <taxon>Magnoliopsida</taxon>
        <taxon>eudicotyledons</taxon>
        <taxon>Gunneridae</taxon>
        <taxon>Pentapetalae</taxon>
        <taxon>rosids</taxon>
        <taxon>Vitales</taxon>
        <taxon>Vitaceae</taxon>
        <taxon>Viteae</taxon>
        <taxon>Vitis</taxon>
    </lineage>
</organism>
<reference key="1">
    <citation type="journal article" date="2007" name="Nature">
        <title>The grapevine genome sequence suggests ancestral hexaploidization in major angiosperm phyla.</title>
        <authorList>
            <person name="Jaillon O."/>
            <person name="Aury J.-M."/>
            <person name="Noel B."/>
            <person name="Policriti A."/>
            <person name="Clepet C."/>
            <person name="Casagrande A."/>
            <person name="Choisne N."/>
            <person name="Aubourg S."/>
            <person name="Vitulo N."/>
            <person name="Jubin C."/>
            <person name="Vezzi A."/>
            <person name="Legeai F."/>
            <person name="Hugueney P."/>
            <person name="Dasilva C."/>
            <person name="Horner D."/>
            <person name="Mica E."/>
            <person name="Jublot D."/>
            <person name="Poulain J."/>
            <person name="Bruyere C."/>
            <person name="Billault A."/>
            <person name="Segurens B."/>
            <person name="Gouyvenoux M."/>
            <person name="Ugarte E."/>
            <person name="Cattonaro F."/>
            <person name="Anthouard V."/>
            <person name="Vico V."/>
            <person name="Del Fabbro C."/>
            <person name="Alaux M."/>
            <person name="Di Gaspero G."/>
            <person name="Dumas V."/>
            <person name="Felice N."/>
            <person name="Paillard S."/>
            <person name="Juman I."/>
            <person name="Moroldo M."/>
            <person name="Scalabrin S."/>
            <person name="Canaguier A."/>
            <person name="Le Clainche I."/>
            <person name="Malacrida G."/>
            <person name="Durand E."/>
            <person name="Pesole G."/>
            <person name="Laucou V."/>
            <person name="Chatelet P."/>
            <person name="Merdinoglu D."/>
            <person name="Delledonne M."/>
            <person name="Pezzotti M."/>
            <person name="Lecharny A."/>
            <person name="Scarpelli C."/>
            <person name="Artiguenave F."/>
            <person name="Pe M.E."/>
            <person name="Valle G."/>
            <person name="Morgante M."/>
            <person name="Caboche M."/>
            <person name="Adam-Blondon A.-F."/>
            <person name="Weissenbach J."/>
            <person name="Quetier F."/>
            <person name="Wincker P."/>
        </authorList>
    </citation>
    <scope>NUCLEOTIDE SEQUENCE [LARGE SCALE GENOMIC DNA]</scope>
    <source>
        <strain>cv. Pinot noir / PN40024</strain>
    </source>
</reference>
<feature type="chain" id="PRO_0000363056" description="S-adenosylmethionine synthase 3">
    <location>
        <begin position="1"/>
        <end position="389"/>
    </location>
</feature>
<feature type="binding site" evidence="3">
    <location>
        <position position="9"/>
    </location>
    <ligand>
        <name>Mg(2+)</name>
        <dbReference type="ChEBI" id="CHEBI:18420"/>
    </ligand>
</feature>
<feature type="binding site" description="in other chain" evidence="4">
    <location>
        <position position="15"/>
    </location>
    <ligand>
        <name>ATP</name>
        <dbReference type="ChEBI" id="CHEBI:30616"/>
        <note>ligand shared between two neighboring subunits</note>
    </ligand>
</feature>
<feature type="binding site" evidence="2">
    <location>
        <position position="43"/>
    </location>
    <ligand>
        <name>K(+)</name>
        <dbReference type="ChEBI" id="CHEBI:29103"/>
    </ligand>
</feature>
<feature type="binding site" description="in other chain" evidence="2">
    <location>
        <position position="56"/>
    </location>
    <ligand>
        <name>L-methionine</name>
        <dbReference type="ChEBI" id="CHEBI:57844"/>
        <note>ligand shared between two neighboring subunits</note>
    </ligand>
</feature>
<feature type="binding site" description="in other chain" evidence="2">
    <location>
        <position position="99"/>
    </location>
    <ligand>
        <name>L-methionine</name>
        <dbReference type="ChEBI" id="CHEBI:57844"/>
        <note>ligand shared between two neighboring subunits</note>
    </ligand>
</feature>
<feature type="binding site" description="in other chain" evidence="4">
    <location>
        <begin position="167"/>
        <end position="169"/>
    </location>
    <ligand>
        <name>ATP</name>
        <dbReference type="ChEBI" id="CHEBI:30616"/>
        <note>ligand shared between two neighboring subunits</note>
    </ligand>
</feature>
<feature type="binding site" description="in other chain" evidence="4">
    <location>
        <begin position="235"/>
        <end position="238"/>
    </location>
    <ligand>
        <name>ATP</name>
        <dbReference type="ChEBI" id="CHEBI:30616"/>
        <note>ligand shared between two neighboring subunits</note>
    </ligand>
</feature>
<feature type="binding site" description="in other chain" evidence="4">
    <location>
        <position position="246"/>
    </location>
    <ligand>
        <name>ATP</name>
        <dbReference type="ChEBI" id="CHEBI:30616"/>
        <note>ligand shared between two neighboring subunits</note>
    </ligand>
</feature>
<feature type="binding site" evidence="2">
    <location>
        <position position="246"/>
    </location>
    <ligand>
        <name>L-methionine</name>
        <dbReference type="ChEBI" id="CHEBI:57844"/>
        <note>ligand shared between two neighboring subunits</note>
    </ligand>
</feature>
<feature type="binding site" description="in other chain" evidence="2">
    <location>
        <begin position="252"/>
        <end position="253"/>
    </location>
    <ligand>
        <name>ATP</name>
        <dbReference type="ChEBI" id="CHEBI:30616"/>
        <note>ligand shared between two neighboring subunits</note>
    </ligand>
</feature>
<feature type="binding site" evidence="2">
    <location>
        <position position="269"/>
    </location>
    <ligand>
        <name>ATP</name>
        <dbReference type="ChEBI" id="CHEBI:30616"/>
        <note>ligand shared between two neighboring subunits</note>
    </ligand>
</feature>
<feature type="binding site" evidence="2">
    <location>
        <position position="273"/>
    </location>
    <ligand>
        <name>ATP</name>
        <dbReference type="ChEBI" id="CHEBI:30616"/>
        <note>ligand shared between two neighboring subunits</note>
    </ligand>
</feature>
<feature type="binding site" evidence="3">
    <location>
        <position position="277"/>
    </location>
    <ligand>
        <name>ATP</name>
        <dbReference type="ChEBI" id="CHEBI:30616"/>
        <note>ligand shared between two neighboring subunits</note>
    </ligand>
</feature>
<feature type="binding site" description="in other chain" evidence="2">
    <location>
        <position position="277"/>
    </location>
    <ligand>
        <name>L-methionine</name>
        <dbReference type="ChEBI" id="CHEBI:57844"/>
        <note>ligand shared between two neighboring subunits</note>
    </ligand>
</feature>
<dbReference type="EC" id="2.5.1.6" evidence="5"/>
<dbReference type="RefSeq" id="NP_001384843.1">
    <property type="nucleotide sequence ID" value="NM_001397914.1"/>
</dbReference>
<dbReference type="RefSeq" id="XP_003632745.1">
    <property type="nucleotide sequence ID" value="XM_003632697.3"/>
</dbReference>
<dbReference type="RefSeq" id="XP_010653984.1">
    <property type="nucleotide sequence ID" value="XM_010655682.3"/>
</dbReference>
<dbReference type="SMR" id="A7QJG1"/>
<dbReference type="EnsemblPlants" id="Vitvi08g04349_t001">
    <property type="protein sequence ID" value="Vitvi08g04349_P001"/>
    <property type="gene ID" value="Vitvi08g04349"/>
</dbReference>
<dbReference type="GeneID" id="100245243"/>
<dbReference type="Gramene" id="Vitvi08g04349_t001">
    <property type="protein sequence ID" value="Vitvi08g04349_P001"/>
    <property type="gene ID" value="Vitvi08g04349"/>
</dbReference>
<dbReference type="OrthoDB" id="5852090at2759"/>
<dbReference type="UniPathway" id="UPA00315">
    <property type="reaction ID" value="UER00080"/>
</dbReference>
<dbReference type="ExpressionAtlas" id="A7QJG1">
    <property type="expression patterns" value="baseline"/>
</dbReference>
<dbReference type="GO" id="GO:0005737">
    <property type="term" value="C:cytoplasm"/>
    <property type="evidence" value="ECO:0007669"/>
    <property type="project" value="UniProtKB-SubCell"/>
</dbReference>
<dbReference type="GO" id="GO:0005524">
    <property type="term" value="F:ATP binding"/>
    <property type="evidence" value="ECO:0007669"/>
    <property type="project" value="UniProtKB-KW"/>
</dbReference>
<dbReference type="GO" id="GO:0046872">
    <property type="term" value="F:metal ion binding"/>
    <property type="evidence" value="ECO:0007669"/>
    <property type="project" value="UniProtKB-KW"/>
</dbReference>
<dbReference type="GO" id="GO:0004478">
    <property type="term" value="F:methionine adenosyltransferase activity"/>
    <property type="evidence" value="ECO:0007669"/>
    <property type="project" value="UniProtKB-EC"/>
</dbReference>
<dbReference type="GO" id="GO:0006730">
    <property type="term" value="P:one-carbon metabolic process"/>
    <property type="evidence" value="ECO:0007669"/>
    <property type="project" value="UniProtKB-KW"/>
</dbReference>
<dbReference type="GO" id="GO:0006556">
    <property type="term" value="P:S-adenosylmethionine biosynthetic process"/>
    <property type="evidence" value="ECO:0007669"/>
    <property type="project" value="UniProtKB-UniPathway"/>
</dbReference>
<dbReference type="CDD" id="cd18079">
    <property type="entry name" value="S-AdoMet_synt"/>
    <property type="match status" value="1"/>
</dbReference>
<dbReference type="FunFam" id="3.30.300.10:FF:000001">
    <property type="entry name" value="S-adenosylmethionine synthase"/>
    <property type="match status" value="1"/>
</dbReference>
<dbReference type="FunFam" id="3.30.300.10:FF:000003">
    <property type="entry name" value="S-adenosylmethionine synthase"/>
    <property type="match status" value="1"/>
</dbReference>
<dbReference type="FunFam" id="3.30.300.10:FF:000004">
    <property type="entry name" value="S-adenosylmethionine synthase"/>
    <property type="match status" value="1"/>
</dbReference>
<dbReference type="Gene3D" id="3.30.300.10">
    <property type="match status" value="3"/>
</dbReference>
<dbReference type="HAMAP" id="MF_00086">
    <property type="entry name" value="S_AdoMet_synth1"/>
    <property type="match status" value="1"/>
</dbReference>
<dbReference type="InterPro" id="IPR022631">
    <property type="entry name" value="ADOMET_SYNTHASE_CS"/>
</dbReference>
<dbReference type="InterPro" id="IPR022630">
    <property type="entry name" value="S-AdoMet_synt_C"/>
</dbReference>
<dbReference type="InterPro" id="IPR022629">
    <property type="entry name" value="S-AdoMet_synt_central"/>
</dbReference>
<dbReference type="InterPro" id="IPR022628">
    <property type="entry name" value="S-AdoMet_synt_N"/>
</dbReference>
<dbReference type="InterPro" id="IPR002133">
    <property type="entry name" value="S-AdoMet_synthetase"/>
</dbReference>
<dbReference type="InterPro" id="IPR022636">
    <property type="entry name" value="S-AdoMet_synthetase_sfam"/>
</dbReference>
<dbReference type="NCBIfam" id="TIGR01034">
    <property type="entry name" value="metK"/>
    <property type="match status" value="1"/>
</dbReference>
<dbReference type="PANTHER" id="PTHR11964">
    <property type="entry name" value="S-ADENOSYLMETHIONINE SYNTHETASE"/>
    <property type="match status" value="1"/>
</dbReference>
<dbReference type="Pfam" id="PF02773">
    <property type="entry name" value="S-AdoMet_synt_C"/>
    <property type="match status" value="1"/>
</dbReference>
<dbReference type="Pfam" id="PF02772">
    <property type="entry name" value="S-AdoMet_synt_M"/>
    <property type="match status" value="1"/>
</dbReference>
<dbReference type="Pfam" id="PF00438">
    <property type="entry name" value="S-AdoMet_synt_N"/>
    <property type="match status" value="1"/>
</dbReference>
<dbReference type="PIRSF" id="PIRSF000497">
    <property type="entry name" value="MAT"/>
    <property type="match status" value="1"/>
</dbReference>
<dbReference type="SUPFAM" id="SSF55973">
    <property type="entry name" value="S-adenosylmethionine synthetase"/>
    <property type="match status" value="3"/>
</dbReference>
<dbReference type="PROSITE" id="PS00376">
    <property type="entry name" value="ADOMET_SYNTHASE_1"/>
    <property type="match status" value="1"/>
</dbReference>
<dbReference type="PROSITE" id="PS00377">
    <property type="entry name" value="ADOMET_SYNTHASE_2"/>
    <property type="match status" value="1"/>
</dbReference>
<proteinExistence type="inferred from homology"/>